<sequence>MSRRGPAEKKTVKRDPFYRNRVVNMLINRILKHGKKSLAYKILYRAMKKIQQKKKRNPLSILRQAIRRVTPKIAVKRRRVSGSAYQVPIEIKAPQGKVLAIRWLLEAARKRPGRNMAFKLSSELMDATKGKGNAIRKKEETYRMAEANRTFANFR</sequence>
<feature type="chain" id="PRO_0000277050" description="Small ribosomal subunit protein uS7cz/uS7cy">
    <location>
        <begin position="1"/>
        <end position="155"/>
    </location>
</feature>
<reference key="1">
    <citation type="journal article" date="2006" name="Mol. Biol. Evol.">
        <title>The complete chloroplast genome sequence of Pelargonium x hortorum: organization and evolution of the largest and most highly rearranged chloroplast genome of land plants.</title>
        <authorList>
            <person name="Chumley T.W."/>
            <person name="Palmer J.D."/>
            <person name="Mower J.P."/>
            <person name="Fourcade H.M."/>
            <person name="Calie P.J."/>
            <person name="Boore J.L."/>
            <person name="Jansen R.K."/>
        </authorList>
    </citation>
    <scope>NUCLEOTIDE SEQUENCE [LARGE SCALE GENOMIC DNA]</scope>
    <source>
        <strain>cv. Ringo White</strain>
    </source>
</reference>
<geneLocation type="chloroplast"/>
<comment type="function">
    <text evidence="1">One of the primary rRNA binding proteins, it binds directly to 16S rRNA where it nucleates assembly of the head domain of the 30S subunit.</text>
</comment>
<comment type="subunit">
    <text>Part of the 30S ribosomal subunit.</text>
</comment>
<comment type="subcellular location">
    <subcellularLocation>
        <location>Plastid</location>
        <location>Chloroplast</location>
    </subcellularLocation>
</comment>
<comment type="similarity">
    <text evidence="3">Belongs to the universal ribosomal protein uS7 family.</text>
</comment>
<organism>
    <name type="scientific">Pelargonium hortorum</name>
    <name type="common">Common geranium</name>
    <name type="synonym">Pelargonium inquinans x Pelargonium zonale</name>
    <dbReference type="NCBI Taxonomy" id="4031"/>
    <lineage>
        <taxon>Eukaryota</taxon>
        <taxon>Viridiplantae</taxon>
        <taxon>Streptophyta</taxon>
        <taxon>Embryophyta</taxon>
        <taxon>Tracheophyta</taxon>
        <taxon>Spermatophyta</taxon>
        <taxon>Magnoliopsida</taxon>
        <taxon>eudicotyledons</taxon>
        <taxon>Gunneridae</taxon>
        <taxon>Pentapetalae</taxon>
        <taxon>rosids</taxon>
        <taxon>malvids</taxon>
        <taxon>Geraniales</taxon>
        <taxon>Geraniaceae</taxon>
        <taxon>Pelargonium</taxon>
    </lineage>
</organism>
<dbReference type="EMBL" id="DQ897681">
    <property type="protein sequence ID" value="ABI17287.1"/>
    <property type="molecule type" value="Genomic_DNA"/>
</dbReference>
<dbReference type="EMBL" id="DQ897681">
    <property type="protein sequence ID" value="ABI17352.1"/>
    <property type="molecule type" value="Genomic_DNA"/>
</dbReference>
<dbReference type="SMR" id="Q06FM0"/>
<dbReference type="GO" id="GO:0009507">
    <property type="term" value="C:chloroplast"/>
    <property type="evidence" value="ECO:0007669"/>
    <property type="project" value="UniProtKB-SubCell"/>
</dbReference>
<dbReference type="GO" id="GO:0015935">
    <property type="term" value="C:small ribosomal subunit"/>
    <property type="evidence" value="ECO:0007669"/>
    <property type="project" value="InterPro"/>
</dbReference>
<dbReference type="GO" id="GO:0019843">
    <property type="term" value="F:rRNA binding"/>
    <property type="evidence" value="ECO:0007669"/>
    <property type="project" value="UniProtKB-UniRule"/>
</dbReference>
<dbReference type="GO" id="GO:0003735">
    <property type="term" value="F:structural constituent of ribosome"/>
    <property type="evidence" value="ECO:0007669"/>
    <property type="project" value="InterPro"/>
</dbReference>
<dbReference type="GO" id="GO:0006412">
    <property type="term" value="P:translation"/>
    <property type="evidence" value="ECO:0007669"/>
    <property type="project" value="UniProtKB-UniRule"/>
</dbReference>
<dbReference type="CDD" id="cd14871">
    <property type="entry name" value="uS7_Chloroplast"/>
    <property type="match status" value="1"/>
</dbReference>
<dbReference type="FunFam" id="1.10.455.10:FF:000001">
    <property type="entry name" value="30S ribosomal protein S7"/>
    <property type="match status" value="1"/>
</dbReference>
<dbReference type="Gene3D" id="1.10.455.10">
    <property type="entry name" value="Ribosomal protein S7 domain"/>
    <property type="match status" value="1"/>
</dbReference>
<dbReference type="HAMAP" id="MF_00480_B">
    <property type="entry name" value="Ribosomal_uS7_B"/>
    <property type="match status" value="1"/>
</dbReference>
<dbReference type="InterPro" id="IPR000235">
    <property type="entry name" value="Ribosomal_uS7"/>
</dbReference>
<dbReference type="InterPro" id="IPR005717">
    <property type="entry name" value="Ribosomal_uS7_bac/org-type"/>
</dbReference>
<dbReference type="InterPro" id="IPR020606">
    <property type="entry name" value="Ribosomal_uS7_CS"/>
</dbReference>
<dbReference type="InterPro" id="IPR023798">
    <property type="entry name" value="Ribosomal_uS7_dom"/>
</dbReference>
<dbReference type="InterPro" id="IPR036823">
    <property type="entry name" value="Ribosomal_uS7_dom_sf"/>
</dbReference>
<dbReference type="NCBIfam" id="TIGR01029">
    <property type="entry name" value="rpsG_bact"/>
    <property type="match status" value="1"/>
</dbReference>
<dbReference type="PANTHER" id="PTHR11205">
    <property type="entry name" value="RIBOSOMAL PROTEIN S7"/>
    <property type="match status" value="1"/>
</dbReference>
<dbReference type="Pfam" id="PF00177">
    <property type="entry name" value="Ribosomal_S7"/>
    <property type="match status" value="1"/>
</dbReference>
<dbReference type="PIRSF" id="PIRSF002122">
    <property type="entry name" value="RPS7p_RPS7a_RPS5e_RPS7o"/>
    <property type="match status" value="1"/>
</dbReference>
<dbReference type="SUPFAM" id="SSF47973">
    <property type="entry name" value="Ribosomal protein S7"/>
    <property type="match status" value="1"/>
</dbReference>
<dbReference type="PROSITE" id="PS00052">
    <property type="entry name" value="RIBOSOMAL_S7"/>
    <property type="match status" value="1"/>
</dbReference>
<name>RR7_PELHO</name>
<protein>
    <recommendedName>
        <fullName evidence="2">Small ribosomal subunit protein uS7cz/uS7cy</fullName>
    </recommendedName>
    <alternativeName>
        <fullName>30S ribosomal protein S7, chloroplastic</fullName>
    </alternativeName>
</protein>
<gene>
    <name type="primary">rps7-A</name>
</gene>
<gene>
    <name type="primary">rps7-B</name>
</gene>
<proteinExistence type="inferred from homology"/>
<accession>Q06FM0</accession>
<keyword id="KW-0150">Chloroplast</keyword>
<keyword id="KW-0934">Plastid</keyword>
<keyword id="KW-0687">Ribonucleoprotein</keyword>
<keyword id="KW-0689">Ribosomal protein</keyword>
<keyword id="KW-0694">RNA-binding</keyword>
<keyword id="KW-0699">rRNA-binding</keyword>
<evidence type="ECO:0000250" key="1"/>
<evidence type="ECO:0000255" key="2">
    <source>
        <dbReference type="HAMAP-Rule" id="MF_00480"/>
    </source>
</evidence>
<evidence type="ECO:0000305" key="3"/>